<proteinExistence type="inferred from homology"/>
<feature type="chain" id="PRO_1000215897" description="Methylthioribose-1-phosphate isomerase">
    <location>
        <begin position="1"/>
        <end position="344"/>
    </location>
</feature>
<feature type="active site" description="Proton donor" evidence="1">
    <location>
        <position position="243"/>
    </location>
</feature>
<feature type="binding site" evidence="1">
    <location>
        <begin position="55"/>
        <end position="57"/>
    </location>
    <ligand>
        <name>substrate</name>
    </ligand>
</feature>
<feature type="binding site" evidence="1">
    <location>
        <position position="98"/>
    </location>
    <ligand>
        <name>substrate</name>
    </ligand>
</feature>
<feature type="binding site" evidence="1">
    <location>
        <position position="202"/>
    </location>
    <ligand>
        <name>substrate</name>
    </ligand>
</feature>
<feature type="binding site" evidence="1">
    <location>
        <begin position="253"/>
        <end position="254"/>
    </location>
    <ligand>
        <name>substrate</name>
    </ligand>
</feature>
<feature type="site" description="Transition state stabilizer" evidence="1">
    <location>
        <position position="163"/>
    </location>
</feature>
<reference key="1">
    <citation type="submission" date="2006-03" db="EMBL/GenBank/DDBJ databases">
        <title>Complete genome sequence of Gemmatimonas aurantiaca T-27 that represents a novel phylum Gemmatimonadetes.</title>
        <authorList>
            <person name="Takasaki K."/>
            <person name="Ichikawa N."/>
            <person name="Miura H."/>
            <person name="Matsushita S."/>
            <person name="Watanabe Y."/>
            <person name="Oguchi A."/>
            <person name="Ankai A."/>
            <person name="Yashiro I."/>
            <person name="Takahashi M."/>
            <person name="Terui Y."/>
            <person name="Fukui S."/>
            <person name="Yokoyama H."/>
            <person name="Tanikawa S."/>
            <person name="Hanada S."/>
            <person name="Kamagata Y."/>
            <person name="Fujita N."/>
        </authorList>
    </citation>
    <scope>NUCLEOTIDE SEQUENCE [LARGE SCALE GENOMIC DNA]</scope>
    <source>
        <strain>DSM 14586 / JCM 11422 / NBRC 100505 / T-27</strain>
    </source>
</reference>
<organism>
    <name type="scientific">Gemmatimonas aurantiaca (strain DSM 14586 / JCM 11422 / NBRC 100505 / T-27)</name>
    <dbReference type="NCBI Taxonomy" id="379066"/>
    <lineage>
        <taxon>Bacteria</taxon>
        <taxon>Pseudomonadati</taxon>
        <taxon>Gemmatimonadota</taxon>
        <taxon>Gemmatimonadia</taxon>
        <taxon>Gemmatimonadales</taxon>
        <taxon>Gemmatimonadaceae</taxon>
        <taxon>Gemmatimonas</taxon>
    </lineage>
</organism>
<keyword id="KW-0028">Amino-acid biosynthesis</keyword>
<keyword id="KW-0413">Isomerase</keyword>
<keyword id="KW-0486">Methionine biosynthesis</keyword>
<keyword id="KW-1185">Reference proteome</keyword>
<name>MTNA_GEMAT</name>
<sequence length="344" mass="35957">MPVPPLPLHVPAVGWSPDLRALRILDQRLLPGAQEVRDLVQLEEIVEAIRTLAVRGAPAIGVAAAIGLVVALEVDSGGQETRARALLADYAARLQRARPTAVNLGWAIDRLVRTAHRTAVGSMLAALRAEAEAIRAEDVAMCEAIGQHGLAVVPDGARVLTHCNAGALATAGIGTALAPLYMAHARGRALTVYADETRPLRQGARLTAWELSRAGISVSVLPDGAAASLLSQGLVDLVIVGADRIAANGDVANKVGTYGVALAAAAHHVPFYVAAPGSTIDPHTATGRDIVIEHRDADELGELPPGVPAWNPAFDVTPRALIRGYITDRGFVEPPFTLADYAGR</sequence>
<accession>C1A6J9</accession>
<comment type="function">
    <text evidence="1">Catalyzes the interconversion of methylthioribose-1-phosphate (MTR-1-P) into methylthioribulose-1-phosphate (MTRu-1-P).</text>
</comment>
<comment type="catalytic activity">
    <reaction evidence="1">
        <text>5-(methylsulfanyl)-alpha-D-ribose 1-phosphate = 5-(methylsulfanyl)-D-ribulose 1-phosphate</text>
        <dbReference type="Rhea" id="RHEA:19989"/>
        <dbReference type="ChEBI" id="CHEBI:58533"/>
        <dbReference type="ChEBI" id="CHEBI:58548"/>
        <dbReference type="EC" id="5.3.1.23"/>
    </reaction>
</comment>
<comment type="pathway">
    <text evidence="1">Amino-acid biosynthesis; L-methionine biosynthesis via salvage pathway; L-methionine from S-methyl-5-thio-alpha-D-ribose 1-phosphate: step 1/6.</text>
</comment>
<comment type="similarity">
    <text evidence="2">Belongs to the eIF-2B alpha/beta/delta subunits family. MtnA subfamily.</text>
</comment>
<dbReference type="EC" id="5.3.1.23" evidence="1"/>
<dbReference type="EMBL" id="AP009153">
    <property type="protein sequence ID" value="BAH37859.1"/>
    <property type="molecule type" value="Genomic_DNA"/>
</dbReference>
<dbReference type="RefSeq" id="WP_012682306.1">
    <property type="nucleotide sequence ID" value="NC_012489.1"/>
</dbReference>
<dbReference type="SMR" id="C1A6J9"/>
<dbReference type="STRING" id="379066.GAU_0817"/>
<dbReference type="KEGG" id="gau:GAU_0817"/>
<dbReference type="eggNOG" id="COG0182">
    <property type="taxonomic scope" value="Bacteria"/>
</dbReference>
<dbReference type="HOGENOM" id="CLU_016218_1_2_0"/>
<dbReference type="OrthoDB" id="9803436at2"/>
<dbReference type="UniPathway" id="UPA00904">
    <property type="reaction ID" value="UER00874"/>
</dbReference>
<dbReference type="Proteomes" id="UP000002209">
    <property type="component" value="Chromosome"/>
</dbReference>
<dbReference type="GO" id="GO:0046523">
    <property type="term" value="F:S-methyl-5-thioribose-1-phosphate isomerase activity"/>
    <property type="evidence" value="ECO:0007669"/>
    <property type="project" value="UniProtKB-UniRule"/>
</dbReference>
<dbReference type="GO" id="GO:0019509">
    <property type="term" value="P:L-methionine salvage from methylthioadenosine"/>
    <property type="evidence" value="ECO:0007669"/>
    <property type="project" value="UniProtKB-UniRule"/>
</dbReference>
<dbReference type="FunFam" id="1.20.120.420:FF:000003">
    <property type="entry name" value="Methylthioribose-1-phosphate isomerase"/>
    <property type="match status" value="1"/>
</dbReference>
<dbReference type="FunFam" id="3.40.50.10470:FF:000006">
    <property type="entry name" value="Methylthioribose-1-phosphate isomerase"/>
    <property type="match status" value="1"/>
</dbReference>
<dbReference type="Gene3D" id="1.20.120.420">
    <property type="entry name" value="translation initiation factor eif-2b, domain 1"/>
    <property type="match status" value="1"/>
</dbReference>
<dbReference type="Gene3D" id="3.40.50.10470">
    <property type="entry name" value="Translation initiation factor eif-2b, domain 2"/>
    <property type="match status" value="1"/>
</dbReference>
<dbReference type="HAMAP" id="MF_01678">
    <property type="entry name" value="Salvage_MtnA"/>
    <property type="match status" value="1"/>
</dbReference>
<dbReference type="InterPro" id="IPR000649">
    <property type="entry name" value="IF-2B-related"/>
</dbReference>
<dbReference type="InterPro" id="IPR005251">
    <property type="entry name" value="IF-M1Pi"/>
</dbReference>
<dbReference type="InterPro" id="IPR042529">
    <property type="entry name" value="IF_2B-like_C"/>
</dbReference>
<dbReference type="InterPro" id="IPR011559">
    <property type="entry name" value="Initiation_fac_2B_a/b/d"/>
</dbReference>
<dbReference type="InterPro" id="IPR027363">
    <property type="entry name" value="M1Pi_N"/>
</dbReference>
<dbReference type="InterPro" id="IPR037171">
    <property type="entry name" value="NagB/RpiA_transferase-like"/>
</dbReference>
<dbReference type="NCBIfam" id="TIGR00524">
    <property type="entry name" value="eIF-2B_rel"/>
    <property type="match status" value="1"/>
</dbReference>
<dbReference type="NCBIfam" id="NF004326">
    <property type="entry name" value="PRK05720.1"/>
    <property type="match status" value="1"/>
</dbReference>
<dbReference type="NCBIfam" id="TIGR00512">
    <property type="entry name" value="salvage_mtnA"/>
    <property type="match status" value="1"/>
</dbReference>
<dbReference type="PANTHER" id="PTHR43475">
    <property type="entry name" value="METHYLTHIORIBOSE-1-PHOSPHATE ISOMERASE"/>
    <property type="match status" value="1"/>
</dbReference>
<dbReference type="PANTHER" id="PTHR43475:SF1">
    <property type="entry name" value="METHYLTHIORIBOSE-1-PHOSPHATE ISOMERASE"/>
    <property type="match status" value="1"/>
</dbReference>
<dbReference type="Pfam" id="PF01008">
    <property type="entry name" value="IF-2B"/>
    <property type="match status" value="1"/>
</dbReference>
<dbReference type="SUPFAM" id="SSF100950">
    <property type="entry name" value="NagB/RpiA/CoA transferase-like"/>
    <property type="match status" value="1"/>
</dbReference>
<gene>
    <name evidence="1" type="primary">mtnA</name>
    <name type="ordered locus">GAU_0817</name>
</gene>
<protein>
    <recommendedName>
        <fullName evidence="1">Methylthioribose-1-phosphate isomerase</fullName>
        <shortName evidence="1">M1Pi</shortName>
        <shortName evidence="1">MTR-1-P isomerase</shortName>
        <ecNumber evidence="1">5.3.1.23</ecNumber>
    </recommendedName>
    <alternativeName>
        <fullName evidence="1">S-methyl-5-thioribose-1-phosphate isomerase</fullName>
    </alternativeName>
</protein>
<evidence type="ECO:0000255" key="1">
    <source>
        <dbReference type="HAMAP-Rule" id="MF_01678"/>
    </source>
</evidence>
<evidence type="ECO:0000305" key="2"/>